<proteinExistence type="inferred from homology"/>
<evidence type="ECO:0000255" key="1">
    <source>
        <dbReference type="HAMAP-Rule" id="MF_01838"/>
    </source>
</evidence>
<reference key="1">
    <citation type="journal article" date="2010" name="Genome Biol. Evol.">
        <title>Continuing evolution of Burkholderia mallei through genome reduction and large-scale rearrangements.</title>
        <authorList>
            <person name="Losada L."/>
            <person name="Ronning C.M."/>
            <person name="DeShazer D."/>
            <person name="Woods D."/>
            <person name="Fedorova N."/>
            <person name="Kim H.S."/>
            <person name="Shabalina S.A."/>
            <person name="Pearson T.R."/>
            <person name="Brinkac L."/>
            <person name="Tan P."/>
            <person name="Nandi T."/>
            <person name="Crabtree J."/>
            <person name="Badger J."/>
            <person name="Beckstrom-Sternberg S."/>
            <person name="Saqib M."/>
            <person name="Schutzer S.E."/>
            <person name="Keim P."/>
            <person name="Nierman W.C."/>
        </authorList>
    </citation>
    <scope>NUCLEOTIDE SEQUENCE [LARGE SCALE GENOMIC DNA]</scope>
    <source>
        <strain>1106a</strain>
    </source>
</reference>
<sequence length="397" mass="42740">MIIKPRVRGFICVTTHPAGCAASVREQIAYVARRGPIERGPKKVLVIGASTGYGLAARIAAAFGAGAATLGVFFERAPADAKPGTAGWYNSAAFHDEAAARGLQATSVNGDAFSDEIKHKTIDAIRRDLGQVDLVVYSVAAPRRTHPKTGVTHQSTLKPIGHAVRLRGIDTDNEAIKETLLQPATPDEIADTVAVMGGEDWRMWIDALDAAGVLADGAKTTAFTYLGEQVTHDIYWNGSIGEAKKDLDRTVLALRGKLAARGGDARVSVLKAVVTQASSAIPMMPLYLSLLFKVMKARGTHEGCIEQVDGLLRDSLYGAQPHVDAEGRLRADRLELDPAVQARVLELWDQVTDDNLYPLTDFAGYKAEFLRLFGFGIDGVDYDAPVEPNVRIPNLIE</sequence>
<dbReference type="EC" id="1.3.1.9" evidence="1"/>
<dbReference type="EMBL" id="CP000572">
    <property type="protein sequence ID" value="ABN91177.1"/>
    <property type="molecule type" value="Genomic_DNA"/>
</dbReference>
<dbReference type="RefSeq" id="WP_004534971.1">
    <property type="nucleotide sequence ID" value="NC_009076.1"/>
</dbReference>
<dbReference type="SMR" id="A3NU97"/>
<dbReference type="GeneID" id="93059969"/>
<dbReference type="KEGG" id="bpl:BURPS1106A_1647"/>
<dbReference type="HOGENOM" id="CLU_057698_1_0_4"/>
<dbReference type="UniPathway" id="UPA00094"/>
<dbReference type="Proteomes" id="UP000006738">
    <property type="component" value="Chromosome I"/>
</dbReference>
<dbReference type="GO" id="GO:0004318">
    <property type="term" value="F:enoyl-[acyl-carrier-protein] reductase (NADH) activity"/>
    <property type="evidence" value="ECO:0007669"/>
    <property type="project" value="UniProtKB-UniRule"/>
</dbReference>
<dbReference type="GO" id="GO:0051287">
    <property type="term" value="F:NAD binding"/>
    <property type="evidence" value="ECO:0007669"/>
    <property type="project" value="UniProtKB-UniRule"/>
</dbReference>
<dbReference type="GO" id="GO:0050343">
    <property type="term" value="F:trans-2-enoyl-CoA reductase (NADH) activity"/>
    <property type="evidence" value="ECO:0007669"/>
    <property type="project" value="TreeGrafter"/>
</dbReference>
<dbReference type="GO" id="GO:0006633">
    <property type="term" value="P:fatty acid biosynthetic process"/>
    <property type="evidence" value="ECO:0007669"/>
    <property type="project" value="UniProtKB-UniRule"/>
</dbReference>
<dbReference type="FunFam" id="3.40.50.720:FF:000221">
    <property type="entry name" value="Enoyl-[acyl-carrier-protein] reductase [NADH]"/>
    <property type="match status" value="1"/>
</dbReference>
<dbReference type="Gene3D" id="3.40.50.720">
    <property type="entry name" value="NAD(P)-binding Rossmann-like Domain"/>
    <property type="match status" value="1"/>
</dbReference>
<dbReference type="HAMAP" id="MF_01838">
    <property type="entry name" value="FabV_reductase"/>
    <property type="match status" value="1"/>
</dbReference>
<dbReference type="InterPro" id="IPR024906">
    <property type="entry name" value="Eno_Rdtase_FAD-bd_dom"/>
</dbReference>
<dbReference type="InterPro" id="IPR024910">
    <property type="entry name" value="Enoyl-CoA_Rdtase_cat_dom"/>
</dbReference>
<dbReference type="InterPro" id="IPR050048">
    <property type="entry name" value="FabV-like_NADH_b"/>
</dbReference>
<dbReference type="InterPro" id="IPR010758">
    <property type="entry name" value="Trans-2-enoyl-CoA_reductase"/>
</dbReference>
<dbReference type="NCBIfam" id="NF043048">
    <property type="entry name" value="EnoyACPredFabV"/>
    <property type="match status" value="1"/>
</dbReference>
<dbReference type="NCBIfam" id="NF010177">
    <property type="entry name" value="PRK13656.1"/>
    <property type="match status" value="1"/>
</dbReference>
<dbReference type="PANTHER" id="PTHR37480">
    <property type="entry name" value="ENOYL-[ACYL-CARRIER-PROTEIN] REDUCTASE [NADH]"/>
    <property type="match status" value="1"/>
</dbReference>
<dbReference type="PANTHER" id="PTHR37480:SF1">
    <property type="entry name" value="ENOYL-[ACYL-CARRIER-PROTEIN] REDUCTASE [NADH]"/>
    <property type="match status" value="1"/>
</dbReference>
<dbReference type="Pfam" id="PF07055">
    <property type="entry name" value="Eno-Rase_FAD_bd"/>
    <property type="match status" value="1"/>
</dbReference>
<dbReference type="Pfam" id="PF12242">
    <property type="entry name" value="Eno-Rase_NADH_b"/>
    <property type="match status" value="1"/>
</dbReference>
<dbReference type="Pfam" id="PF12241">
    <property type="entry name" value="Enoyl_reductase"/>
    <property type="match status" value="1"/>
</dbReference>
<name>FABV_BURP0</name>
<accession>A3NU97</accession>
<gene>
    <name evidence="1" type="primary">fabV</name>
    <name type="ordered locus">BURPS1106A_1647</name>
</gene>
<organism>
    <name type="scientific">Burkholderia pseudomallei (strain 1106a)</name>
    <dbReference type="NCBI Taxonomy" id="357348"/>
    <lineage>
        <taxon>Bacteria</taxon>
        <taxon>Pseudomonadati</taxon>
        <taxon>Pseudomonadota</taxon>
        <taxon>Betaproteobacteria</taxon>
        <taxon>Burkholderiales</taxon>
        <taxon>Burkholderiaceae</taxon>
        <taxon>Burkholderia</taxon>
        <taxon>pseudomallei group</taxon>
    </lineage>
</organism>
<feature type="chain" id="PRO_1000070472" description="Enoyl-[acyl-carrier-protein] reductase [NADH]">
    <location>
        <begin position="1"/>
        <end position="397"/>
    </location>
</feature>
<feature type="active site" description="Proton donor" evidence="1">
    <location>
        <position position="235"/>
    </location>
</feature>
<feature type="binding site" evidence="1">
    <location>
        <begin position="48"/>
        <end position="53"/>
    </location>
    <ligand>
        <name>NAD(+)</name>
        <dbReference type="ChEBI" id="CHEBI:57540"/>
    </ligand>
</feature>
<feature type="binding site" evidence="1">
    <location>
        <begin position="74"/>
        <end position="75"/>
    </location>
    <ligand>
        <name>NAD(+)</name>
        <dbReference type="ChEBI" id="CHEBI:57540"/>
    </ligand>
</feature>
<feature type="binding site" evidence="1">
    <location>
        <begin position="111"/>
        <end position="112"/>
    </location>
    <ligand>
        <name>NAD(+)</name>
        <dbReference type="ChEBI" id="CHEBI:57540"/>
    </ligand>
</feature>
<feature type="binding site" evidence="1">
    <location>
        <begin position="139"/>
        <end position="140"/>
    </location>
    <ligand>
        <name>NAD(+)</name>
        <dbReference type="ChEBI" id="CHEBI:57540"/>
    </ligand>
</feature>
<feature type="binding site" evidence="1">
    <location>
        <position position="225"/>
    </location>
    <ligand>
        <name>substrate</name>
    </ligand>
</feature>
<feature type="binding site" evidence="1">
    <location>
        <position position="244"/>
    </location>
    <ligand>
        <name>NAD(+)</name>
        <dbReference type="ChEBI" id="CHEBI:57540"/>
    </ligand>
</feature>
<feature type="binding site" evidence="1">
    <location>
        <begin position="273"/>
        <end position="275"/>
    </location>
    <ligand>
        <name>NAD(+)</name>
        <dbReference type="ChEBI" id="CHEBI:57540"/>
    </ligand>
</feature>
<feature type="site" description="Plays an important role in discriminating NADH against NADPH" evidence="1">
    <location>
        <position position="75"/>
    </location>
</feature>
<comment type="function">
    <text evidence="1">Involved in the final reduction of the elongation cycle of fatty acid synthesis (FAS II). Catalyzes the reduction of a carbon-carbon double bond in an enoyl moiety that is covalently linked to an acyl carrier protein (ACP).</text>
</comment>
<comment type="catalytic activity">
    <reaction evidence="1">
        <text>a 2,3-saturated acyl-[ACP] + NAD(+) = a (2E)-enoyl-[ACP] + NADH + H(+)</text>
        <dbReference type="Rhea" id="RHEA:10240"/>
        <dbReference type="Rhea" id="RHEA-COMP:9925"/>
        <dbReference type="Rhea" id="RHEA-COMP:9926"/>
        <dbReference type="ChEBI" id="CHEBI:15378"/>
        <dbReference type="ChEBI" id="CHEBI:57540"/>
        <dbReference type="ChEBI" id="CHEBI:57945"/>
        <dbReference type="ChEBI" id="CHEBI:78784"/>
        <dbReference type="ChEBI" id="CHEBI:78785"/>
        <dbReference type="EC" id="1.3.1.9"/>
    </reaction>
</comment>
<comment type="pathway">
    <text evidence="1">Lipid metabolism; fatty acid biosynthesis.</text>
</comment>
<comment type="subunit">
    <text evidence="1">Monomer.</text>
</comment>
<comment type="similarity">
    <text evidence="1">Belongs to the TER reductase family.</text>
</comment>
<protein>
    <recommendedName>
        <fullName evidence="1">Enoyl-[acyl-carrier-protein] reductase [NADH]</fullName>
        <shortName evidence="1">ENR</shortName>
        <ecNumber evidence="1">1.3.1.9</ecNumber>
    </recommendedName>
</protein>
<keyword id="KW-0275">Fatty acid biosynthesis</keyword>
<keyword id="KW-0276">Fatty acid metabolism</keyword>
<keyword id="KW-0444">Lipid biosynthesis</keyword>
<keyword id="KW-0443">Lipid metabolism</keyword>
<keyword id="KW-0520">NAD</keyword>
<keyword id="KW-0560">Oxidoreductase</keyword>